<reference key="1">
    <citation type="journal article" date="2005" name="Nature">
        <title>The map-based sequence of the rice genome.</title>
        <authorList>
            <consortium name="International rice genome sequencing project (IRGSP)"/>
        </authorList>
    </citation>
    <scope>NUCLEOTIDE SEQUENCE [LARGE SCALE GENOMIC DNA]</scope>
    <source>
        <strain>cv. Nipponbare</strain>
    </source>
</reference>
<reference key="2">
    <citation type="journal article" date="2008" name="Nucleic Acids Res.">
        <title>The rice annotation project database (RAP-DB): 2008 update.</title>
        <authorList>
            <consortium name="The rice annotation project (RAP)"/>
        </authorList>
    </citation>
    <scope>GENOME REANNOTATION</scope>
    <source>
        <strain>cv. Nipponbare</strain>
    </source>
</reference>
<reference key="3">
    <citation type="journal article" date="2013" name="Rice">
        <title>Improvement of the Oryza sativa Nipponbare reference genome using next generation sequence and optical map data.</title>
        <authorList>
            <person name="Kawahara Y."/>
            <person name="de la Bastide M."/>
            <person name="Hamilton J.P."/>
            <person name="Kanamori H."/>
            <person name="McCombie W.R."/>
            <person name="Ouyang S."/>
            <person name="Schwartz D.C."/>
            <person name="Tanaka T."/>
            <person name="Wu J."/>
            <person name="Zhou S."/>
            <person name="Childs K.L."/>
            <person name="Davidson R.M."/>
            <person name="Lin H."/>
            <person name="Quesada-Ocampo L."/>
            <person name="Vaillancourt B."/>
            <person name="Sakai H."/>
            <person name="Lee S.S."/>
            <person name="Kim J."/>
            <person name="Numa H."/>
            <person name="Itoh T."/>
            <person name="Buell C.R."/>
            <person name="Matsumoto T."/>
        </authorList>
    </citation>
    <scope>GENOME REANNOTATION</scope>
    <source>
        <strain>cv. Nipponbare</strain>
    </source>
</reference>
<reference key="4">
    <citation type="journal article" date="2003" name="Science">
        <title>Collection, mapping, and annotation of over 28,000 cDNA clones from japonica rice.</title>
        <authorList>
            <consortium name="The rice full-length cDNA consortium"/>
        </authorList>
    </citation>
    <scope>NUCLEOTIDE SEQUENCE [LARGE SCALE MRNA]</scope>
    <source>
        <strain>cv. Nipponbare</strain>
    </source>
</reference>
<reference key="5">
    <citation type="journal article" date="2005" name="Planta">
        <title>Rice K+ uptake channel OsAKT1 is sensitive to salt stress.</title>
        <authorList>
            <person name="Fuchs I."/>
            <person name="Stoelzle S."/>
            <person name="Ivashikina N."/>
            <person name="Hedrich R."/>
        </authorList>
    </citation>
    <scope>FUNCTION</scope>
    <scope>TISSUE SPECIFICITY</scope>
    <scope>INDUCTION</scope>
</reference>
<feature type="chain" id="PRO_0000054095" description="Potassium channel AKT1">
    <location>
        <begin position="1"/>
        <end position="935"/>
    </location>
</feature>
<feature type="topological domain" description="Cytoplasmic" evidence="2">
    <location>
        <begin position="1"/>
        <end position="106"/>
    </location>
</feature>
<feature type="transmembrane region" description="Helical; Name=Segment S1" evidence="2">
    <location>
        <begin position="107"/>
        <end position="127"/>
    </location>
</feature>
<feature type="topological domain" description="Extracellular" evidence="2">
    <location>
        <begin position="128"/>
        <end position="136"/>
    </location>
</feature>
<feature type="transmembrane region" description="Helical; Name=Segment S2" evidence="2">
    <location>
        <begin position="137"/>
        <end position="157"/>
    </location>
</feature>
<feature type="topological domain" description="Cytoplasmic" evidence="2">
    <location>
        <begin position="158"/>
        <end position="178"/>
    </location>
</feature>
<feature type="transmembrane region" description="Helical; Name=Segment S3" evidence="2">
    <location>
        <begin position="179"/>
        <end position="199"/>
    </location>
</feature>
<feature type="topological domain" description="Extracellular" evidence="2">
    <location>
        <begin position="200"/>
        <end position="205"/>
    </location>
</feature>
<feature type="transmembrane region" description="Helical; Voltage-sensor; Name=Segment S4" evidence="2">
    <location>
        <begin position="206"/>
        <end position="226"/>
    </location>
</feature>
<feature type="topological domain" description="Cytoplasmic" evidence="2">
    <location>
        <begin position="227"/>
        <end position="240"/>
    </location>
</feature>
<feature type="transmembrane region" description="Helical; Name=Segment S5" evidence="2">
    <location>
        <begin position="241"/>
        <end position="261"/>
    </location>
</feature>
<feature type="topological domain" description="Extracellular" evidence="2">
    <location>
        <begin position="262"/>
        <end position="288"/>
    </location>
</feature>
<feature type="intramembrane region" description="Pore-forming; Name=Segment H5" evidence="2">
    <location>
        <begin position="289"/>
        <end position="308"/>
    </location>
</feature>
<feature type="topological domain" description="Extracellular" evidence="2">
    <location>
        <begin position="309"/>
        <end position="312"/>
    </location>
</feature>
<feature type="transmembrane region" description="Helical; Name=Segment S6" evidence="2">
    <location>
        <begin position="313"/>
        <end position="333"/>
    </location>
</feature>
<feature type="topological domain" description="Cytoplasmic" evidence="2">
    <location>
        <begin position="334"/>
        <end position="935"/>
    </location>
</feature>
<feature type="repeat" description="ANK 1">
    <location>
        <begin position="565"/>
        <end position="594"/>
    </location>
</feature>
<feature type="repeat" description="ANK 2">
    <location>
        <begin position="598"/>
        <end position="627"/>
    </location>
</feature>
<feature type="repeat" description="ANK 3">
    <location>
        <begin position="631"/>
        <end position="660"/>
    </location>
</feature>
<feature type="repeat" description="ANK 4">
    <location>
        <begin position="662"/>
        <end position="691"/>
    </location>
</feature>
<feature type="repeat" description="ANK 5">
    <location>
        <begin position="695"/>
        <end position="724"/>
    </location>
</feature>
<feature type="repeat" description="ANK 6">
    <location>
        <begin position="728"/>
        <end position="757"/>
    </location>
</feature>
<feature type="domain" description="KHA" evidence="3">
    <location>
        <begin position="859"/>
        <end position="935"/>
    </location>
</feature>
<feature type="region of interest" description="Disordered" evidence="4">
    <location>
        <begin position="826"/>
        <end position="854"/>
    </location>
</feature>
<feature type="compositionally biased region" description="Polar residues" evidence="4">
    <location>
        <begin position="845"/>
        <end position="854"/>
    </location>
</feature>
<feature type="binding site">
    <location>
        <begin position="419"/>
        <end position="538"/>
    </location>
    <ligand>
        <name>a nucleoside 3',5'-cyclic phosphate</name>
        <dbReference type="ChEBI" id="CHEBI:58464"/>
    </ligand>
</feature>
<proteinExistence type="evidence at transcript level"/>
<evidence type="ECO:0000250" key="1"/>
<evidence type="ECO:0000255" key="2"/>
<evidence type="ECO:0000255" key="3">
    <source>
        <dbReference type="PROSITE-ProRule" id="PRU00823"/>
    </source>
</evidence>
<evidence type="ECO:0000256" key="4">
    <source>
        <dbReference type="SAM" id="MobiDB-lite"/>
    </source>
</evidence>
<evidence type="ECO:0000269" key="5">
    <source>
    </source>
</evidence>
<evidence type="ECO:0000305" key="6"/>
<accession>Q0JKV1</accession>
<accession>A0A0P0V5X9</accession>
<accession>Q8VYX2</accession>
<organism>
    <name type="scientific">Oryza sativa subsp. japonica</name>
    <name type="common">Rice</name>
    <dbReference type="NCBI Taxonomy" id="39947"/>
    <lineage>
        <taxon>Eukaryota</taxon>
        <taxon>Viridiplantae</taxon>
        <taxon>Streptophyta</taxon>
        <taxon>Embryophyta</taxon>
        <taxon>Tracheophyta</taxon>
        <taxon>Spermatophyta</taxon>
        <taxon>Magnoliopsida</taxon>
        <taxon>Liliopsida</taxon>
        <taxon>Poales</taxon>
        <taxon>Poaceae</taxon>
        <taxon>BOP clade</taxon>
        <taxon>Oryzoideae</taxon>
        <taxon>Oryzeae</taxon>
        <taxon>Oryzinae</taxon>
        <taxon>Oryza</taxon>
        <taxon>Oryza sativa</taxon>
    </lineage>
</organism>
<protein>
    <recommendedName>
        <fullName>Potassium channel AKT1</fullName>
        <shortName>OsAKT1</shortName>
    </recommendedName>
</protein>
<sequence length="935" mass="104464">MARWGAARMAACGPWGRNRRVGAGDAFEASEVRRDGRSRMMPACGPWGAGHGGGDPALERELSRDGSHYSISSAILPSLGARSNRRIKLRRFIISPYDRRYRIWETFLIVLVVYSAWVSPFEFGFIPKPTGALATADNVVNAFFAVDIILTFFVAYLDKMSYMLEDDPKKIAWRYSTTWLVLDVASTIPSEFARRILPSKLRSYGFFNMLRLWRLRRVSSLFSRLEKDRHFNYFWVRCAKLICVTLFAVHCAACFYYLLADRYPVPTSTWIGNYMADFHERSLWIRYVTSVYWSITTLTTVGYGDLHAENTREMIFNIFYMLFNLGLTAYLIGNMTNLVVHGTSRTRNYRDTIQAATSFGVRNQLPPRLQDQMISHISLKYRTDSEGLQQQEILDSLPKAIKSSISQYLFFHLVQNVYLFQGVSNDLIFQLVSEMKAEYFPPREDVILQNEAPTDFYILVSGSVELVEQQNGADQVIQVATSGEVVGEIGVLCYRPQLFTVRTRSLCQLLRLNRTAFLSIVQSNVGDGTIIMNNLIQFLKEQKENSVMAGVVKEIESMLARGNLDLPITLCFAVTRGDDFLLHQLLKRGMDPNESDNDGHTALHIAASKGNEQCVRLLLEYGADPNARDSEGKVPLWEALCEKHAAVVQLLVEGGADLSSGDTGLYACIAVEESDTELLNDIIHYGGDVNRARRDGTTALHRAVCDGNVQMAELLLEHGADIDKQDGNGWTPRALAEQQGHDDIQLLFRSRKAATASGHHHVPSSTTTRVAPAAAAASLIGRFNSEPMMKNMIHEDADLPSRVLPEKLRRKRVTFQNSLFGVISSSQAQRETDHPLSRGGLAATGSPNPSSGSRNAVIRVTISCPEKGNTAGKLVLLPQTLDMLLELGAKKFDFAPTKVLTVEGAEVDEVELIRDGDHLVLVSNEWDAEKMKGKS</sequence>
<keyword id="KW-0040">ANK repeat</keyword>
<keyword id="KW-0407">Ion channel</keyword>
<keyword id="KW-0406">Ion transport</keyword>
<keyword id="KW-0472">Membrane</keyword>
<keyword id="KW-0630">Potassium</keyword>
<keyword id="KW-0631">Potassium channel</keyword>
<keyword id="KW-0633">Potassium transport</keyword>
<keyword id="KW-1185">Reference proteome</keyword>
<keyword id="KW-0677">Repeat</keyword>
<keyword id="KW-0812">Transmembrane</keyword>
<keyword id="KW-1133">Transmembrane helix</keyword>
<keyword id="KW-0813">Transport</keyword>
<keyword id="KW-0851">Voltage-gated channel</keyword>
<comment type="function">
    <text evidence="5">Highly selective inward-rectifying potassium channel that mediates potassium uptake by plant roots. Assuming opened or closed conformations in response to the voltage difference across the membrane, the channel is activated by hyperpolarization. May be a major salt-sensitive potassium channel in roots.</text>
</comment>
<comment type="subunit">
    <text evidence="1">The potassium channel is probably a homo- or heterotetrameric complex of pore-forming subunits.</text>
</comment>
<comment type="subcellular location">
    <subcellularLocation>
        <location evidence="6">Membrane</location>
        <topology evidence="6">Multi-pass membrane protein</topology>
    </subcellularLocation>
</comment>
<comment type="tissue specificity">
    <text evidence="5">Expressed in roots and coleoptile of young seedlings.</text>
</comment>
<comment type="induction">
    <text evidence="5">Down-regulated by salt stress.</text>
</comment>
<comment type="domain">
    <text evidence="1">The segment S4 is probably the voltage-sensor and is characterized by a series of positively charged amino acids. The pore-forming region H5 is enclosed by the transmembrane segments S5 and S6 in the Shaker-type (1P/6TM) and contains the GYGD signature motif which seems to be involved in potassium selectivity (By similarity).</text>
</comment>
<comment type="domain">
    <text evidence="1">The KHA domain (rich in hydrophobic and acidic residues) present in the C-terminal part is likely to be important for tetramerization.</text>
</comment>
<comment type="similarity">
    <text evidence="6">Belongs to the potassium channel family. Plant (TC 1.A.1.4) subfamily.</text>
</comment>
<comment type="sequence caution" evidence="6">
    <conflict type="frameshift">
        <sequence resource="EMBL" id="AK120308"/>
    </conflict>
</comment>
<gene>
    <name type="primary">AKT1</name>
    <name type="ordered locus">Os01g0648000</name>
    <name type="ordered locus">LOC_Os01g45990</name>
</gene>
<name>AKT1_ORYSJ</name>
<dbReference type="EMBL" id="AP008207">
    <property type="protein sequence ID" value="BAF05627.1"/>
    <property type="molecule type" value="Genomic_DNA"/>
</dbReference>
<dbReference type="EMBL" id="AP014957">
    <property type="protein sequence ID" value="BAS73421.1"/>
    <property type="molecule type" value="Genomic_DNA"/>
</dbReference>
<dbReference type="EMBL" id="AK120308">
    <property type="status" value="NOT_ANNOTATED_CDS"/>
    <property type="molecule type" value="mRNA"/>
</dbReference>
<dbReference type="RefSeq" id="XP_015621694.1">
    <property type="nucleotide sequence ID" value="XM_015766208.1"/>
</dbReference>
<dbReference type="SMR" id="Q0JKV1"/>
<dbReference type="FunCoup" id="Q0JKV1">
    <property type="interactions" value="1047"/>
</dbReference>
<dbReference type="STRING" id="39947.Q0JKV1"/>
<dbReference type="PaxDb" id="39947-Q0JKV1"/>
<dbReference type="EnsemblPlants" id="Os01t0648000-01">
    <property type="protein sequence ID" value="Os01t0648000-01"/>
    <property type="gene ID" value="Os01g0648000"/>
</dbReference>
<dbReference type="Gramene" id="Os01t0648000-01">
    <property type="protein sequence ID" value="Os01t0648000-01"/>
    <property type="gene ID" value="Os01g0648000"/>
</dbReference>
<dbReference type="KEGG" id="dosa:Os01g0648000"/>
<dbReference type="eggNOG" id="KOG0498">
    <property type="taxonomic scope" value="Eukaryota"/>
</dbReference>
<dbReference type="HOGENOM" id="CLU_005746_8_3_1"/>
<dbReference type="InParanoid" id="Q0JKV1"/>
<dbReference type="OMA" id="KRVTFQN"/>
<dbReference type="OrthoDB" id="426293at2759"/>
<dbReference type="Proteomes" id="UP000000763">
    <property type="component" value="Chromosome 1"/>
</dbReference>
<dbReference type="Proteomes" id="UP000059680">
    <property type="component" value="Chromosome 1"/>
</dbReference>
<dbReference type="GO" id="GO:0034702">
    <property type="term" value="C:monoatomic ion channel complex"/>
    <property type="evidence" value="ECO:0007669"/>
    <property type="project" value="UniProtKB-KW"/>
</dbReference>
<dbReference type="GO" id="GO:0005249">
    <property type="term" value="F:voltage-gated potassium channel activity"/>
    <property type="evidence" value="ECO:0007669"/>
    <property type="project" value="InterPro"/>
</dbReference>
<dbReference type="CDD" id="cd00038">
    <property type="entry name" value="CAP_ED"/>
    <property type="match status" value="1"/>
</dbReference>
<dbReference type="FunFam" id="2.60.120.10:FF:000074">
    <property type="entry name" value="Potassium channel KAT2"/>
    <property type="match status" value="1"/>
</dbReference>
<dbReference type="FunFam" id="1.10.287.70:FF:000123">
    <property type="entry name" value="Potassium channel KAT3"/>
    <property type="match status" value="1"/>
</dbReference>
<dbReference type="Gene3D" id="1.10.287.70">
    <property type="match status" value="1"/>
</dbReference>
<dbReference type="Gene3D" id="1.25.40.20">
    <property type="entry name" value="Ankyrin repeat-containing domain"/>
    <property type="match status" value="1"/>
</dbReference>
<dbReference type="Gene3D" id="2.60.120.10">
    <property type="entry name" value="Jelly Rolls"/>
    <property type="match status" value="1"/>
</dbReference>
<dbReference type="InterPro" id="IPR002110">
    <property type="entry name" value="Ankyrin_rpt"/>
</dbReference>
<dbReference type="InterPro" id="IPR036770">
    <property type="entry name" value="Ankyrin_rpt-contain_sf"/>
</dbReference>
<dbReference type="InterPro" id="IPR000595">
    <property type="entry name" value="cNMP-bd_dom"/>
</dbReference>
<dbReference type="InterPro" id="IPR018490">
    <property type="entry name" value="cNMP-bd_dom_sf"/>
</dbReference>
<dbReference type="InterPro" id="IPR005821">
    <property type="entry name" value="Ion_trans_dom"/>
</dbReference>
<dbReference type="InterPro" id="IPR003938">
    <property type="entry name" value="K_chnl_volt-dep_EAG/ELK/ERG"/>
</dbReference>
<dbReference type="InterPro" id="IPR045319">
    <property type="entry name" value="KAT/AKT"/>
</dbReference>
<dbReference type="InterPro" id="IPR021789">
    <property type="entry name" value="KHA_dom"/>
</dbReference>
<dbReference type="InterPro" id="IPR014710">
    <property type="entry name" value="RmlC-like_jellyroll"/>
</dbReference>
<dbReference type="PANTHER" id="PTHR45743">
    <property type="entry name" value="POTASSIUM CHANNEL AKT1"/>
    <property type="match status" value="1"/>
</dbReference>
<dbReference type="PANTHER" id="PTHR45743:SF2">
    <property type="entry name" value="POTASSIUM CHANNEL AKT1"/>
    <property type="match status" value="1"/>
</dbReference>
<dbReference type="Pfam" id="PF12796">
    <property type="entry name" value="Ank_2"/>
    <property type="match status" value="2"/>
</dbReference>
<dbReference type="Pfam" id="PF00027">
    <property type="entry name" value="cNMP_binding"/>
    <property type="match status" value="1"/>
</dbReference>
<dbReference type="Pfam" id="PF00520">
    <property type="entry name" value="Ion_trans"/>
    <property type="match status" value="1"/>
</dbReference>
<dbReference type="Pfam" id="PF11834">
    <property type="entry name" value="KHA"/>
    <property type="match status" value="1"/>
</dbReference>
<dbReference type="PRINTS" id="PR01415">
    <property type="entry name" value="ANKYRIN"/>
</dbReference>
<dbReference type="PRINTS" id="PR01463">
    <property type="entry name" value="EAGCHANLFMLY"/>
</dbReference>
<dbReference type="SMART" id="SM00248">
    <property type="entry name" value="ANK"/>
    <property type="match status" value="5"/>
</dbReference>
<dbReference type="SMART" id="SM00100">
    <property type="entry name" value="cNMP"/>
    <property type="match status" value="1"/>
</dbReference>
<dbReference type="SUPFAM" id="SSF48403">
    <property type="entry name" value="Ankyrin repeat"/>
    <property type="match status" value="1"/>
</dbReference>
<dbReference type="SUPFAM" id="SSF51206">
    <property type="entry name" value="cAMP-binding domain-like"/>
    <property type="match status" value="1"/>
</dbReference>
<dbReference type="SUPFAM" id="SSF81324">
    <property type="entry name" value="Voltage-gated potassium channels"/>
    <property type="match status" value="1"/>
</dbReference>
<dbReference type="PROSITE" id="PS50297">
    <property type="entry name" value="ANK_REP_REGION"/>
    <property type="match status" value="1"/>
</dbReference>
<dbReference type="PROSITE" id="PS50088">
    <property type="entry name" value="ANK_REPEAT"/>
    <property type="match status" value="3"/>
</dbReference>
<dbReference type="PROSITE" id="PS50042">
    <property type="entry name" value="CNMP_BINDING_3"/>
    <property type="match status" value="1"/>
</dbReference>
<dbReference type="PROSITE" id="PS51490">
    <property type="entry name" value="KHA"/>
    <property type="match status" value="1"/>
</dbReference>